<dbReference type="EMBL" id="AP009240">
    <property type="protein sequence ID" value="BAG78965.1"/>
    <property type="molecule type" value="Genomic_DNA"/>
</dbReference>
<dbReference type="RefSeq" id="WP_000189314.1">
    <property type="nucleotide sequence ID" value="NC_011415.1"/>
</dbReference>
<dbReference type="SMR" id="B6I1N0"/>
<dbReference type="GeneID" id="93778829"/>
<dbReference type="KEGG" id="ecy:ECSE_3441"/>
<dbReference type="HOGENOM" id="CLU_135650_0_1_6"/>
<dbReference type="Proteomes" id="UP000008199">
    <property type="component" value="Chromosome"/>
</dbReference>
<dbReference type="CDD" id="cd10456">
    <property type="entry name" value="GIY-YIG_UPF0213"/>
    <property type="match status" value="1"/>
</dbReference>
<dbReference type="FunFam" id="3.40.1440.10:FF:000002">
    <property type="entry name" value="UPF0213 protein YhbQ"/>
    <property type="match status" value="1"/>
</dbReference>
<dbReference type="Gene3D" id="3.40.1440.10">
    <property type="entry name" value="GIY-YIG endonuclease"/>
    <property type="match status" value="1"/>
</dbReference>
<dbReference type="HAMAP" id="MF_01029">
    <property type="entry name" value="UPF0213"/>
    <property type="match status" value="1"/>
</dbReference>
<dbReference type="InterPro" id="IPR000305">
    <property type="entry name" value="GIY-YIG_endonuc"/>
</dbReference>
<dbReference type="InterPro" id="IPR035901">
    <property type="entry name" value="GIY-YIG_endonuc_sf"/>
</dbReference>
<dbReference type="InterPro" id="IPR050190">
    <property type="entry name" value="UPF0213_domain"/>
</dbReference>
<dbReference type="InterPro" id="IPR022992">
    <property type="entry name" value="UPF0213_GIY-YIG_endonuc"/>
</dbReference>
<dbReference type="PANTHER" id="PTHR34477">
    <property type="entry name" value="UPF0213 PROTEIN YHBQ"/>
    <property type="match status" value="1"/>
</dbReference>
<dbReference type="PANTHER" id="PTHR34477:SF1">
    <property type="entry name" value="UPF0213 PROTEIN YHBQ"/>
    <property type="match status" value="1"/>
</dbReference>
<dbReference type="Pfam" id="PF01541">
    <property type="entry name" value="GIY-YIG"/>
    <property type="match status" value="1"/>
</dbReference>
<dbReference type="SMART" id="SM00465">
    <property type="entry name" value="GIYc"/>
    <property type="match status" value="1"/>
</dbReference>
<dbReference type="SUPFAM" id="SSF82771">
    <property type="entry name" value="GIY-YIG endonuclease"/>
    <property type="match status" value="1"/>
</dbReference>
<dbReference type="PROSITE" id="PS50164">
    <property type="entry name" value="GIY_YIG"/>
    <property type="match status" value="1"/>
</dbReference>
<organism>
    <name type="scientific">Escherichia coli (strain SE11)</name>
    <dbReference type="NCBI Taxonomy" id="409438"/>
    <lineage>
        <taxon>Bacteria</taxon>
        <taxon>Pseudomonadati</taxon>
        <taxon>Pseudomonadota</taxon>
        <taxon>Gammaproteobacteria</taxon>
        <taxon>Enterobacterales</taxon>
        <taxon>Enterobacteriaceae</taxon>
        <taxon>Escherichia</taxon>
    </lineage>
</organism>
<gene>
    <name evidence="1" type="primary">yhbQ</name>
    <name type="ordered locus">ECSE_3441</name>
</gene>
<evidence type="ECO:0000255" key="1">
    <source>
        <dbReference type="HAMAP-Rule" id="MF_01029"/>
    </source>
</evidence>
<feature type="chain" id="PRO_1000135748" description="UPF0213 protein YhbQ">
    <location>
        <begin position="1"/>
        <end position="100"/>
    </location>
</feature>
<feature type="domain" description="GIY-YIG" evidence="1">
    <location>
        <begin position="2"/>
        <end position="77"/>
    </location>
</feature>
<accession>B6I1N0</accession>
<comment type="similarity">
    <text evidence="1">Belongs to the UPF0213 family.</text>
</comment>
<proteinExistence type="inferred from homology"/>
<name>YHBQ_ECOSE</name>
<reference key="1">
    <citation type="journal article" date="2008" name="DNA Res.">
        <title>Complete genome sequence and comparative analysis of the wild-type commensal Escherichia coli strain SE11 isolated from a healthy adult.</title>
        <authorList>
            <person name="Oshima K."/>
            <person name="Toh H."/>
            <person name="Ogura Y."/>
            <person name="Sasamoto H."/>
            <person name="Morita H."/>
            <person name="Park S.-H."/>
            <person name="Ooka T."/>
            <person name="Iyoda S."/>
            <person name="Taylor T.D."/>
            <person name="Hayashi T."/>
            <person name="Itoh K."/>
            <person name="Hattori M."/>
        </authorList>
    </citation>
    <scope>NUCLEOTIDE SEQUENCE [LARGE SCALE GENOMIC DNA]</scope>
    <source>
        <strain>SE11</strain>
    </source>
</reference>
<sequence length="100" mass="11242">MTPWFLYLIRTADNKLYTGITTDVERRYQQHQSGKGAKALRGKGELTLAFSAPVGDRSLALRAEYRVKQLTKRQKERLVAEGAGFAELLSSLQTPEIKSD</sequence>
<protein>
    <recommendedName>
        <fullName evidence="1">UPF0213 protein YhbQ</fullName>
    </recommendedName>
</protein>